<proteinExistence type="inferred from homology"/>
<feature type="chain" id="PRO_0000357973" description="NAD(P)H-quinone oxidoreductase subunit H, chloroplastic">
    <location>
        <begin position="1"/>
        <end position="393"/>
    </location>
</feature>
<geneLocation type="chloroplast"/>
<name>NDHH_CERDE</name>
<organism>
    <name type="scientific">Ceratophyllum demersum</name>
    <name type="common">Rigid hornwort</name>
    <name type="synonym">Coontail</name>
    <dbReference type="NCBI Taxonomy" id="4428"/>
    <lineage>
        <taxon>Eukaryota</taxon>
        <taxon>Viridiplantae</taxon>
        <taxon>Streptophyta</taxon>
        <taxon>Embryophyta</taxon>
        <taxon>Tracheophyta</taxon>
        <taxon>Spermatophyta</taxon>
        <taxon>Magnoliopsida</taxon>
        <taxon>Ceratophyllales</taxon>
        <taxon>Ceratophyllaceae</taxon>
        <taxon>Ceratophyllum</taxon>
    </lineage>
</organism>
<protein>
    <recommendedName>
        <fullName evidence="1">NAD(P)H-quinone oxidoreductase subunit H, chloroplastic</fullName>
        <ecNumber evidence="1">7.1.1.-</ecNumber>
    </recommendedName>
    <alternativeName>
        <fullName>NAD(P)H dehydrogenase subunit H</fullName>
    </alternativeName>
    <alternativeName>
        <fullName evidence="1">NADH-plastoquinone oxidoreductase 49 kDa subunit</fullName>
    </alternativeName>
    <alternativeName>
        <fullName evidence="1">NADH-plastoquinone oxidoreductase subunit H</fullName>
    </alternativeName>
</protein>
<comment type="function">
    <text evidence="1">NDH shuttles electrons from NAD(P)H:plastoquinone, via FMN and iron-sulfur (Fe-S) centers, to quinones in the photosynthetic chain and possibly in a chloroplast respiratory chain. The immediate electron acceptor for the enzyme in this species is believed to be plastoquinone. Couples the redox reaction to proton translocation, and thus conserves the redox energy in a proton gradient.</text>
</comment>
<comment type="catalytic activity">
    <reaction evidence="1">
        <text>a plastoquinone + NADH + (n+1) H(+)(in) = a plastoquinol + NAD(+) + n H(+)(out)</text>
        <dbReference type="Rhea" id="RHEA:42608"/>
        <dbReference type="Rhea" id="RHEA-COMP:9561"/>
        <dbReference type="Rhea" id="RHEA-COMP:9562"/>
        <dbReference type="ChEBI" id="CHEBI:15378"/>
        <dbReference type="ChEBI" id="CHEBI:17757"/>
        <dbReference type="ChEBI" id="CHEBI:57540"/>
        <dbReference type="ChEBI" id="CHEBI:57945"/>
        <dbReference type="ChEBI" id="CHEBI:62192"/>
    </reaction>
</comment>
<comment type="catalytic activity">
    <reaction evidence="1">
        <text>a plastoquinone + NADPH + (n+1) H(+)(in) = a plastoquinol + NADP(+) + n H(+)(out)</text>
        <dbReference type="Rhea" id="RHEA:42612"/>
        <dbReference type="Rhea" id="RHEA-COMP:9561"/>
        <dbReference type="Rhea" id="RHEA-COMP:9562"/>
        <dbReference type="ChEBI" id="CHEBI:15378"/>
        <dbReference type="ChEBI" id="CHEBI:17757"/>
        <dbReference type="ChEBI" id="CHEBI:57783"/>
        <dbReference type="ChEBI" id="CHEBI:58349"/>
        <dbReference type="ChEBI" id="CHEBI:62192"/>
    </reaction>
</comment>
<comment type="subunit">
    <text evidence="1">NDH is composed of at least 16 different subunits, 5 of which are encoded in the nucleus.</text>
</comment>
<comment type="subcellular location">
    <subcellularLocation>
        <location evidence="1">Plastid</location>
        <location evidence="1">Chloroplast thylakoid membrane</location>
        <topology evidence="1">Peripheral membrane protein</topology>
        <orientation evidence="1">Stromal side</orientation>
    </subcellularLocation>
</comment>
<comment type="similarity">
    <text evidence="1">Belongs to the complex I 49 kDa subunit family.</text>
</comment>
<dbReference type="EC" id="7.1.1.-" evidence="1"/>
<dbReference type="EMBL" id="EF614270">
    <property type="protein sequence ID" value="ABQ81507.1"/>
    <property type="molecule type" value="Genomic_DNA"/>
</dbReference>
<dbReference type="RefSeq" id="YP_001542503.1">
    <property type="nucleotide sequence ID" value="NC_009962.1"/>
</dbReference>
<dbReference type="SMR" id="A8SEG2"/>
<dbReference type="GeneID" id="5729488"/>
<dbReference type="GO" id="GO:0009535">
    <property type="term" value="C:chloroplast thylakoid membrane"/>
    <property type="evidence" value="ECO:0007669"/>
    <property type="project" value="UniProtKB-SubCell"/>
</dbReference>
<dbReference type="GO" id="GO:0051287">
    <property type="term" value="F:NAD binding"/>
    <property type="evidence" value="ECO:0007669"/>
    <property type="project" value="InterPro"/>
</dbReference>
<dbReference type="GO" id="GO:0016655">
    <property type="term" value="F:oxidoreductase activity, acting on NAD(P)H, quinone or similar compound as acceptor"/>
    <property type="evidence" value="ECO:0007669"/>
    <property type="project" value="UniProtKB-UniRule"/>
</dbReference>
<dbReference type="GO" id="GO:0048038">
    <property type="term" value="F:quinone binding"/>
    <property type="evidence" value="ECO:0007669"/>
    <property type="project" value="UniProtKB-KW"/>
</dbReference>
<dbReference type="GO" id="GO:0019684">
    <property type="term" value="P:photosynthesis, light reaction"/>
    <property type="evidence" value="ECO:0007669"/>
    <property type="project" value="UniProtKB-UniRule"/>
</dbReference>
<dbReference type="FunFam" id="1.10.645.10:FF:000003">
    <property type="entry name" value="NAD(P)H-quinone oxidoreductase subunit H, chloroplastic"/>
    <property type="match status" value="1"/>
</dbReference>
<dbReference type="Gene3D" id="1.10.645.10">
    <property type="entry name" value="Cytochrome-c3 Hydrogenase, chain B"/>
    <property type="match status" value="1"/>
</dbReference>
<dbReference type="HAMAP" id="MF_01358">
    <property type="entry name" value="NDH1_NuoD"/>
    <property type="match status" value="1"/>
</dbReference>
<dbReference type="InterPro" id="IPR001135">
    <property type="entry name" value="NADH_Q_OxRdtase_suD"/>
</dbReference>
<dbReference type="InterPro" id="IPR014029">
    <property type="entry name" value="NADH_UbQ_OxRdtase_49kDa_CS"/>
</dbReference>
<dbReference type="InterPro" id="IPR022885">
    <property type="entry name" value="NDH1_su_D/H"/>
</dbReference>
<dbReference type="InterPro" id="IPR029014">
    <property type="entry name" value="NiFe-Hase_large"/>
</dbReference>
<dbReference type="NCBIfam" id="NF004739">
    <property type="entry name" value="PRK06075.1"/>
    <property type="match status" value="1"/>
</dbReference>
<dbReference type="NCBIfam" id="NF005649">
    <property type="entry name" value="PRK07415.1"/>
    <property type="match status" value="1"/>
</dbReference>
<dbReference type="PANTHER" id="PTHR11993:SF10">
    <property type="entry name" value="NADH DEHYDROGENASE [UBIQUINONE] IRON-SULFUR PROTEIN 2, MITOCHONDRIAL"/>
    <property type="match status" value="1"/>
</dbReference>
<dbReference type="PANTHER" id="PTHR11993">
    <property type="entry name" value="NADH-UBIQUINONE OXIDOREDUCTASE 49 KDA SUBUNIT"/>
    <property type="match status" value="1"/>
</dbReference>
<dbReference type="Pfam" id="PF00346">
    <property type="entry name" value="Complex1_49kDa"/>
    <property type="match status" value="1"/>
</dbReference>
<dbReference type="SUPFAM" id="SSF56762">
    <property type="entry name" value="HydB/Nqo4-like"/>
    <property type="match status" value="1"/>
</dbReference>
<dbReference type="PROSITE" id="PS00535">
    <property type="entry name" value="COMPLEX1_49K"/>
    <property type="match status" value="1"/>
</dbReference>
<sequence>MTVPDKRKDLMIVNMGPQHPSMHGVLRLIVTLDGEDVIDCEPVLGYLHRGMEKIAENRTIIQYLPYVTRWDYLATMFTEAITVNAPEQLGNIQVPKRASYIRVIMLELSRIASHLLWLGPFMADIGAQTPFFYIFRERELIYDLFEAATGMRMMHNFFRIGGVAADLPHGWIDKCLDFCDYFLTGVVEYQKLITRNPIFLERVEGVGIIGGEEAINWGLSGPMLRASGIPWDLRKVDHYESYDEFDWEIQWQKEGDSLARYLVRINEMIESIKIIQQVLEGIPGGPYENLEVRRFARPKDSEWNDFEYRFISKKPSPSFELSKQELYVRVEAPKGELGVFLIGDNSVFPWRWKIRPPGFINLQILPQLVKRMKLADIMTILGSIDIIMGEVDR</sequence>
<evidence type="ECO:0000255" key="1">
    <source>
        <dbReference type="HAMAP-Rule" id="MF_01358"/>
    </source>
</evidence>
<gene>
    <name evidence="1" type="primary">ndhH</name>
</gene>
<keyword id="KW-0150">Chloroplast</keyword>
<keyword id="KW-0472">Membrane</keyword>
<keyword id="KW-0520">NAD</keyword>
<keyword id="KW-0521">NADP</keyword>
<keyword id="KW-0934">Plastid</keyword>
<keyword id="KW-0618">Plastoquinone</keyword>
<keyword id="KW-0874">Quinone</keyword>
<keyword id="KW-0793">Thylakoid</keyword>
<keyword id="KW-1278">Translocase</keyword>
<keyword id="KW-0813">Transport</keyword>
<reference key="1">
    <citation type="journal article" date="2007" name="Proc. Natl. Acad. Sci. U.S.A.">
        <title>Using plastid genome-scale data to resolve enigmatic relationships among basal angiosperms.</title>
        <authorList>
            <person name="Moore M.J."/>
            <person name="Bell C.D."/>
            <person name="Soltis P.S."/>
            <person name="Soltis D.E."/>
        </authorList>
    </citation>
    <scope>NUCLEOTIDE SEQUENCE [LARGE SCALE GENOMIC DNA]</scope>
</reference>
<accession>A8SEG2</accession>